<gene>
    <name evidence="1" type="primary">trmD</name>
    <name type="ordered locus">Ava_1812</name>
</gene>
<reference key="1">
    <citation type="journal article" date="2014" name="Stand. Genomic Sci.">
        <title>Complete genome sequence of Anabaena variabilis ATCC 29413.</title>
        <authorList>
            <person name="Thiel T."/>
            <person name="Pratte B.S."/>
            <person name="Zhong J."/>
            <person name="Goodwin L."/>
            <person name="Copeland A."/>
            <person name="Lucas S."/>
            <person name="Han C."/>
            <person name="Pitluck S."/>
            <person name="Land M.L."/>
            <person name="Kyrpides N.C."/>
            <person name="Woyke T."/>
        </authorList>
    </citation>
    <scope>NUCLEOTIDE SEQUENCE [LARGE SCALE GENOMIC DNA]</scope>
    <source>
        <strain>ATCC 29413 / PCC 7937</strain>
    </source>
</reference>
<dbReference type="EC" id="2.1.1.228" evidence="1"/>
<dbReference type="EMBL" id="CP000117">
    <property type="protein sequence ID" value="ABA21434.1"/>
    <property type="molecule type" value="Genomic_DNA"/>
</dbReference>
<dbReference type="SMR" id="Q3MC52"/>
<dbReference type="STRING" id="240292.Ava_1812"/>
<dbReference type="KEGG" id="ava:Ava_1812"/>
<dbReference type="eggNOG" id="COG0336">
    <property type="taxonomic scope" value="Bacteria"/>
</dbReference>
<dbReference type="HOGENOM" id="CLU_047363_0_1_3"/>
<dbReference type="Proteomes" id="UP000002533">
    <property type="component" value="Chromosome"/>
</dbReference>
<dbReference type="GO" id="GO:0005829">
    <property type="term" value="C:cytosol"/>
    <property type="evidence" value="ECO:0007669"/>
    <property type="project" value="TreeGrafter"/>
</dbReference>
<dbReference type="GO" id="GO:0052906">
    <property type="term" value="F:tRNA (guanine(37)-N1)-methyltransferase activity"/>
    <property type="evidence" value="ECO:0007669"/>
    <property type="project" value="UniProtKB-UniRule"/>
</dbReference>
<dbReference type="GO" id="GO:0002939">
    <property type="term" value="P:tRNA N1-guanine methylation"/>
    <property type="evidence" value="ECO:0007669"/>
    <property type="project" value="TreeGrafter"/>
</dbReference>
<dbReference type="CDD" id="cd18080">
    <property type="entry name" value="TrmD-like"/>
    <property type="match status" value="1"/>
</dbReference>
<dbReference type="FunFam" id="1.10.1270.20:FF:000001">
    <property type="entry name" value="tRNA (guanine-N(1)-)-methyltransferase"/>
    <property type="match status" value="1"/>
</dbReference>
<dbReference type="FunFam" id="3.40.1280.10:FF:000001">
    <property type="entry name" value="tRNA (guanine-N(1)-)-methyltransferase"/>
    <property type="match status" value="1"/>
</dbReference>
<dbReference type="Gene3D" id="3.40.1280.10">
    <property type="match status" value="1"/>
</dbReference>
<dbReference type="Gene3D" id="1.10.1270.20">
    <property type="entry name" value="tRNA(m1g37)methyltransferase, domain 2"/>
    <property type="match status" value="1"/>
</dbReference>
<dbReference type="HAMAP" id="MF_00605">
    <property type="entry name" value="TrmD"/>
    <property type="match status" value="1"/>
</dbReference>
<dbReference type="InterPro" id="IPR029028">
    <property type="entry name" value="Alpha/beta_knot_MTases"/>
</dbReference>
<dbReference type="InterPro" id="IPR023148">
    <property type="entry name" value="tRNA_m1G_MeTrfase_C_sf"/>
</dbReference>
<dbReference type="InterPro" id="IPR002649">
    <property type="entry name" value="tRNA_m1G_MeTrfase_TrmD"/>
</dbReference>
<dbReference type="InterPro" id="IPR029026">
    <property type="entry name" value="tRNA_m1G_MTases_N"/>
</dbReference>
<dbReference type="InterPro" id="IPR016009">
    <property type="entry name" value="tRNA_MeTrfase_TRMD/TRM10"/>
</dbReference>
<dbReference type="NCBIfam" id="NF000648">
    <property type="entry name" value="PRK00026.1"/>
    <property type="match status" value="1"/>
</dbReference>
<dbReference type="NCBIfam" id="TIGR00088">
    <property type="entry name" value="trmD"/>
    <property type="match status" value="1"/>
</dbReference>
<dbReference type="PANTHER" id="PTHR46417">
    <property type="entry name" value="TRNA (GUANINE-N(1)-)-METHYLTRANSFERASE"/>
    <property type="match status" value="1"/>
</dbReference>
<dbReference type="PANTHER" id="PTHR46417:SF1">
    <property type="entry name" value="TRNA (GUANINE-N(1)-)-METHYLTRANSFERASE"/>
    <property type="match status" value="1"/>
</dbReference>
<dbReference type="Pfam" id="PF01746">
    <property type="entry name" value="tRNA_m1G_MT"/>
    <property type="match status" value="1"/>
</dbReference>
<dbReference type="PIRSF" id="PIRSF000386">
    <property type="entry name" value="tRNA_mtase"/>
    <property type="match status" value="1"/>
</dbReference>
<dbReference type="SUPFAM" id="SSF75217">
    <property type="entry name" value="alpha/beta knot"/>
    <property type="match status" value="1"/>
</dbReference>
<organism>
    <name type="scientific">Trichormus variabilis (strain ATCC 29413 / PCC 7937)</name>
    <name type="common">Anabaena variabilis</name>
    <dbReference type="NCBI Taxonomy" id="240292"/>
    <lineage>
        <taxon>Bacteria</taxon>
        <taxon>Bacillati</taxon>
        <taxon>Cyanobacteriota</taxon>
        <taxon>Cyanophyceae</taxon>
        <taxon>Nostocales</taxon>
        <taxon>Nostocaceae</taxon>
        <taxon>Trichormus</taxon>
    </lineage>
</organism>
<accession>Q3MC52</accession>
<sequence length="244" mass="27417">MRFDIVTLFPDCFTSVLSSGLLGKALAKQIAQVNLVNPRDFTTDKHRKVDDEPYGGGVGMLMKPEPIFSAVESLPILERREVILMSPQGQTIDQPLLRELVSNYEQLVVICGHYEGVDDRVLHLVTREVSLGDFILTGGEIPAMALINGVVRLLPGTVAKTESLTAESFEEGLLDYPQYTRPANFRGWKVPDVLLSGNHAAISQWRYEQQIKRTSDRRPDLLEKWQQEKKPGSREQGSREQGEK</sequence>
<feature type="chain" id="PRO_0000257387" description="tRNA (guanine-N(1)-)-methyltransferase">
    <location>
        <begin position="1"/>
        <end position="244"/>
    </location>
</feature>
<feature type="region of interest" description="Disordered" evidence="2">
    <location>
        <begin position="211"/>
        <end position="244"/>
    </location>
</feature>
<feature type="binding site" evidence="1">
    <location>
        <position position="112"/>
    </location>
    <ligand>
        <name>S-adenosyl-L-methionine</name>
        <dbReference type="ChEBI" id="CHEBI:59789"/>
    </ligand>
</feature>
<feature type="binding site" evidence="1">
    <location>
        <begin position="131"/>
        <end position="136"/>
    </location>
    <ligand>
        <name>S-adenosyl-L-methionine</name>
        <dbReference type="ChEBI" id="CHEBI:59789"/>
    </ligand>
</feature>
<keyword id="KW-0963">Cytoplasm</keyword>
<keyword id="KW-0489">Methyltransferase</keyword>
<keyword id="KW-0949">S-adenosyl-L-methionine</keyword>
<keyword id="KW-0808">Transferase</keyword>
<keyword id="KW-0819">tRNA processing</keyword>
<protein>
    <recommendedName>
        <fullName evidence="1">tRNA (guanine-N(1)-)-methyltransferase</fullName>
        <ecNumber evidence="1">2.1.1.228</ecNumber>
    </recommendedName>
    <alternativeName>
        <fullName evidence="1">M1G-methyltransferase</fullName>
    </alternativeName>
    <alternativeName>
        <fullName evidence="1">tRNA [GM37] methyltransferase</fullName>
    </alternativeName>
</protein>
<proteinExistence type="inferred from homology"/>
<evidence type="ECO:0000255" key="1">
    <source>
        <dbReference type="HAMAP-Rule" id="MF_00605"/>
    </source>
</evidence>
<evidence type="ECO:0000256" key="2">
    <source>
        <dbReference type="SAM" id="MobiDB-lite"/>
    </source>
</evidence>
<name>TRMD_TRIV2</name>
<comment type="function">
    <text evidence="1">Specifically methylates guanosine-37 in various tRNAs.</text>
</comment>
<comment type="catalytic activity">
    <reaction evidence="1">
        <text>guanosine(37) in tRNA + S-adenosyl-L-methionine = N(1)-methylguanosine(37) in tRNA + S-adenosyl-L-homocysteine + H(+)</text>
        <dbReference type="Rhea" id="RHEA:36899"/>
        <dbReference type="Rhea" id="RHEA-COMP:10145"/>
        <dbReference type="Rhea" id="RHEA-COMP:10147"/>
        <dbReference type="ChEBI" id="CHEBI:15378"/>
        <dbReference type="ChEBI" id="CHEBI:57856"/>
        <dbReference type="ChEBI" id="CHEBI:59789"/>
        <dbReference type="ChEBI" id="CHEBI:73542"/>
        <dbReference type="ChEBI" id="CHEBI:74269"/>
        <dbReference type="EC" id="2.1.1.228"/>
    </reaction>
</comment>
<comment type="subunit">
    <text evidence="1">Homodimer.</text>
</comment>
<comment type="subcellular location">
    <subcellularLocation>
        <location evidence="1">Cytoplasm</location>
    </subcellularLocation>
</comment>
<comment type="similarity">
    <text evidence="1">Belongs to the RNA methyltransferase TrmD family.</text>
</comment>